<accession>A3CZR1</accession>
<evidence type="ECO:0000255" key="1">
    <source>
        <dbReference type="HAMAP-Rule" id="MF_01635"/>
    </source>
</evidence>
<comment type="function">
    <text evidence="1">Catalyzes the prenylation of para-hydroxybenzoate (PHB) with an all-trans polyprenyl group. Mediates the second step in the final reaction sequence of ubiquinone-8 (UQ-8) biosynthesis, which is the condensation of the polyisoprenoid side chain with PHB, generating the first membrane-bound Q intermediate 3-octaprenyl-4-hydroxybenzoate.</text>
</comment>
<comment type="catalytic activity">
    <reaction evidence="1">
        <text>all-trans-octaprenyl diphosphate + 4-hydroxybenzoate = 4-hydroxy-3-(all-trans-octaprenyl)benzoate + diphosphate</text>
        <dbReference type="Rhea" id="RHEA:27782"/>
        <dbReference type="ChEBI" id="CHEBI:1617"/>
        <dbReference type="ChEBI" id="CHEBI:17879"/>
        <dbReference type="ChEBI" id="CHEBI:33019"/>
        <dbReference type="ChEBI" id="CHEBI:57711"/>
        <dbReference type="EC" id="2.5.1.39"/>
    </reaction>
</comment>
<comment type="cofactor">
    <cofactor evidence="1">
        <name>Mg(2+)</name>
        <dbReference type="ChEBI" id="CHEBI:18420"/>
    </cofactor>
</comment>
<comment type="pathway">
    <text evidence="1">Cofactor biosynthesis; ubiquinone biosynthesis.</text>
</comment>
<comment type="subcellular location">
    <subcellularLocation>
        <location evidence="1">Cell inner membrane</location>
        <topology evidence="1">Multi-pass membrane protein</topology>
    </subcellularLocation>
</comment>
<comment type="similarity">
    <text evidence="1">Belongs to the UbiA prenyltransferase family.</text>
</comment>
<gene>
    <name evidence="1" type="primary">ubiA</name>
    <name type="ordered locus">Sbal_0442</name>
</gene>
<feature type="chain" id="PRO_1000088180" description="4-hydroxybenzoate octaprenyltransferase">
    <location>
        <begin position="1"/>
        <end position="286"/>
    </location>
</feature>
<feature type="transmembrane region" description="Helical" evidence="1">
    <location>
        <begin position="21"/>
        <end position="40"/>
    </location>
</feature>
<feature type="transmembrane region" description="Helical" evidence="1">
    <location>
        <begin position="95"/>
        <end position="115"/>
    </location>
</feature>
<feature type="transmembrane region" description="Helical" evidence="1">
    <location>
        <begin position="142"/>
        <end position="162"/>
    </location>
</feature>
<feature type="transmembrane region" description="Helical" evidence="1">
    <location>
        <begin position="167"/>
        <end position="187"/>
    </location>
</feature>
<feature type="transmembrane region" description="Helical" evidence="1">
    <location>
        <begin position="210"/>
        <end position="230"/>
    </location>
</feature>
<feature type="transmembrane region" description="Helical" evidence="1">
    <location>
        <begin position="235"/>
        <end position="255"/>
    </location>
</feature>
<feature type="transmembrane region" description="Helical" evidence="1">
    <location>
        <begin position="266"/>
        <end position="286"/>
    </location>
</feature>
<sequence>MNLKRKWDVYSRLTRIDRPIGTLLLLWPCLMALMLAAGGMPDLKVLVIFIIGVVIMRACGCIINDYADRDLDSFVERTRSRPLASGEISTKEALILFVILGLSAFGLVLLLNGLVVKLSVVGIILTIIYPFTKRITNMPQMFLGIVWSWSIPMAYAAQTGEVPMEAWWLFAANWCWTVAYDTMYAMVDRDDDLKVGIKSTAILFGKYDRQIIGLFQLAALACFIAAGWSADRGLLYGLGILTFVGFSTYQQMLIFDRERAPCFKAFLNNNWAGLALFVGLGADYLI</sequence>
<organism>
    <name type="scientific">Shewanella baltica (strain OS155 / ATCC BAA-1091)</name>
    <dbReference type="NCBI Taxonomy" id="325240"/>
    <lineage>
        <taxon>Bacteria</taxon>
        <taxon>Pseudomonadati</taxon>
        <taxon>Pseudomonadota</taxon>
        <taxon>Gammaproteobacteria</taxon>
        <taxon>Alteromonadales</taxon>
        <taxon>Shewanellaceae</taxon>
        <taxon>Shewanella</taxon>
    </lineage>
</organism>
<name>UBIA_SHEB5</name>
<protein>
    <recommendedName>
        <fullName evidence="1">4-hydroxybenzoate octaprenyltransferase</fullName>
        <ecNumber evidence="1">2.5.1.39</ecNumber>
    </recommendedName>
    <alternativeName>
        <fullName evidence="1">4-HB polyprenyltransferase</fullName>
    </alternativeName>
</protein>
<dbReference type="EC" id="2.5.1.39" evidence="1"/>
<dbReference type="EMBL" id="CP000563">
    <property type="protein sequence ID" value="ABN59974.1"/>
    <property type="molecule type" value="Genomic_DNA"/>
</dbReference>
<dbReference type="RefSeq" id="WP_011845647.1">
    <property type="nucleotide sequence ID" value="NC_009052.1"/>
</dbReference>
<dbReference type="SMR" id="A3CZR1"/>
<dbReference type="STRING" id="325240.Sbal_0442"/>
<dbReference type="KEGG" id="sbl:Sbal_0442"/>
<dbReference type="HOGENOM" id="CLU_034879_1_0_6"/>
<dbReference type="OrthoDB" id="9782418at2"/>
<dbReference type="UniPathway" id="UPA00232"/>
<dbReference type="Proteomes" id="UP000001557">
    <property type="component" value="Chromosome"/>
</dbReference>
<dbReference type="GO" id="GO:0005886">
    <property type="term" value="C:plasma membrane"/>
    <property type="evidence" value="ECO:0007669"/>
    <property type="project" value="UniProtKB-SubCell"/>
</dbReference>
<dbReference type="GO" id="GO:0008412">
    <property type="term" value="F:4-hydroxybenzoate polyprenyltransferase activity"/>
    <property type="evidence" value="ECO:0007669"/>
    <property type="project" value="UniProtKB-UniRule"/>
</dbReference>
<dbReference type="GO" id="GO:0006744">
    <property type="term" value="P:ubiquinone biosynthetic process"/>
    <property type="evidence" value="ECO:0007669"/>
    <property type="project" value="UniProtKB-UniRule"/>
</dbReference>
<dbReference type="CDD" id="cd13959">
    <property type="entry name" value="PT_UbiA_COQ2"/>
    <property type="match status" value="1"/>
</dbReference>
<dbReference type="FunFam" id="1.10.357.140:FF:000002">
    <property type="entry name" value="4-hydroxybenzoate octaprenyltransferase"/>
    <property type="match status" value="1"/>
</dbReference>
<dbReference type="FunFam" id="1.20.120.1780:FF:000001">
    <property type="entry name" value="4-hydroxybenzoate octaprenyltransferase"/>
    <property type="match status" value="1"/>
</dbReference>
<dbReference type="Gene3D" id="1.10.357.140">
    <property type="entry name" value="UbiA prenyltransferase"/>
    <property type="match status" value="1"/>
</dbReference>
<dbReference type="Gene3D" id="1.20.120.1780">
    <property type="entry name" value="UbiA prenyltransferase"/>
    <property type="match status" value="1"/>
</dbReference>
<dbReference type="HAMAP" id="MF_01635">
    <property type="entry name" value="UbiA"/>
    <property type="match status" value="1"/>
</dbReference>
<dbReference type="InterPro" id="IPR006370">
    <property type="entry name" value="HB_polyprenyltransferase-like"/>
</dbReference>
<dbReference type="InterPro" id="IPR039653">
    <property type="entry name" value="Prenyltransferase"/>
</dbReference>
<dbReference type="InterPro" id="IPR000537">
    <property type="entry name" value="UbiA_prenyltransferase"/>
</dbReference>
<dbReference type="InterPro" id="IPR030470">
    <property type="entry name" value="UbiA_prenylTrfase_CS"/>
</dbReference>
<dbReference type="InterPro" id="IPR044878">
    <property type="entry name" value="UbiA_sf"/>
</dbReference>
<dbReference type="NCBIfam" id="TIGR01474">
    <property type="entry name" value="ubiA_proteo"/>
    <property type="match status" value="1"/>
</dbReference>
<dbReference type="PANTHER" id="PTHR11048:SF28">
    <property type="entry name" value="4-HYDROXYBENZOATE POLYPRENYLTRANSFERASE, MITOCHONDRIAL"/>
    <property type="match status" value="1"/>
</dbReference>
<dbReference type="PANTHER" id="PTHR11048">
    <property type="entry name" value="PRENYLTRANSFERASES"/>
    <property type="match status" value="1"/>
</dbReference>
<dbReference type="Pfam" id="PF01040">
    <property type="entry name" value="UbiA"/>
    <property type="match status" value="1"/>
</dbReference>
<dbReference type="PROSITE" id="PS00943">
    <property type="entry name" value="UBIA"/>
    <property type="match status" value="1"/>
</dbReference>
<keyword id="KW-0997">Cell inner membrane</keyword>
<keyword id="KW-1003">Cell membrane</keyword>
<keyword id="KW-0460">Magnesium</keyword>
<keyword id="KW-0472">Membrane</keyword>
<keyword id="KW-1185">Reference proteome</keyword>
<keyword id="KW-0808">Transferase</keyword>
<keyword id="KW-0812">Transmembrane</keyword>
<keyword id="KW-1133">Transmembrane helix</keyword>
<keyword id="KW-0831">Ubiquinone biosynthesis</keyword>
<proteinExistence type="inferred from homology"/>
<reference key="1">
    <citation type="submission" date="2007-02" db="EMBL/GenBank/DDBJ databases">
        <title>Complete sequence of chromosome of Shewanella baltica OS155.</title>
        <authorList>
            <consortium name="US DOE Joint Genome Institute"/>
            <person name="Copeland A."/>
            <person name="Lucas S."/>
            <person name="Lapidus A."/>
            <person name="Barry K."/>
            <person name="Detter J.C."/>
            <person name="Glavina del Rio T."/>
            <person name="Hammon N."/>
            <person name="Israni S."/>
            <person name="Dalin E."/>
            <person name="Tice H."/>
            <person name="Pitluck S."/>
            <person name="Sims D.R."/>
            <person name="Brettin T."/>
            <person name="Bruce D."/>
            <person name="Han C."/>
            <person name="Tapia R."/>
            <person name="Brainard J."/>
            <person name="Schmutz J."/>
            <person name="Larimer F."/>
            <person name="Land M."/>
            <person name="Hauser L."/>
            <person name="Kyrpides N."/>
            <person name="Mikhailova N."/>
            <person name="Brettar I."/>
            <person name="Klappenbach J."/>
            <person name="Konstantinidis K."/>
            <person name="Rodrigues J."/>
            <person name="Tiedje J."/>
            <person name="Richardson P."/>
        </authorList>
    </citation>
    <scope>NUCLEOTIDE SEQUENCE [LARGE SCALE GENOMIC DNA]</scope>
    <source>
        <strain>OS155 / ATCC BAA-1091</strain>
    </source>
</reference>